<feature type="signal peptide" evidence="1">
    <location>
        <begin position="1"/>
        <end position="43"/>
    </location>
</feature>
<feature type="chain" id="PRO_0000284801" description="Adherens junction-associated protein 1" evidence="1">
    <location>
        <begin position="44"/>
        <end position="411"/>
    </location>
</feature>
<feature type="topological domain" description="Extracellular" evidence="1">
    <location>
        <begin position="44"/>
        <end position="282"/>
    </location>
</feature>
<feature type="transmembrane region" description="Helical" evidence="1">
    <location>
        <begin position="283"/>
        <end position="303"/>
    </location>
</feature>
<feature type="topological domain" description="Cytoplasmic" evidence="1">
    <location>
        <begin position="304"/>
        <end position="411"/>
    </location>
</feature>
<feature type="region of interest" description="Disordered" evidence="2">
    <location>
        <begin position="89"/>
        <end position="108"/>
    </location>
</feature>
<feature type="region of interest" description="Disordered" evidence="2">
    <location>
        <begin position="115"/>
        <end position="197"/>
    </location>
</feature>
<feature type="region of interest" description="Disordered" evidence="2">
    <location>
        <begin position="239"/>
        <end position="268"/>
    </location>
</feature>
<feature type="region of interest" description="Targeting signals">
    <location>
        <begin position="303"/>
        <end position="411"/>
    </location>
</feature>
<feature type="region of interest" description="Disordered" evidence="2">
    <location>
        <begin position="311"/>
        <end position="330"/>
    </location>
</feature>
<feature type="compositionally biased region" description="Low complexity" evidence="2">
    <location>
        <begin position="115"/>
        <end position="146"/>
    </location>
</feature>
<feature type="compositionally biased region" description="Polar residues" evidence="2">
    <location>
        <begin position="166"/>
        <end position="178"/>
    </location>
</feature>
<feature type="compositionally biased region" description="Low complexity" evidence="2">
    <location>
        <begin position="247"/>
        <end position="263"/>
    </location>
</feature>
<feature type="sequence variant" id="VAR_031821" description="In dbSNP:rs242056." evidence="4">
    <original>G</original>
    <variation>R</variation>
    <location>
        <position position="263"/>
    </location>
</feature>
<feature type="mutagenesis site" description="Predominantly localized to the apical membrane." evidence="5">
    <original>L</original>
    <variation>A</variation>
    <location>
        <position position="303"/>
    </location>
</feature>
<feature type="mutagenesis site" description="No effect on membrane localization." evidence="5">
    <original>K</original>
    <variation>A</variation>
    <location>
        <position position="304"/>
    </location>
</feature>
<feature type="mutagenesis site" description="Predominantly localized to the apical membrane." evidence="5">
    <original>Y</original>
    <variation>A</variation>
    <location>
        <position position="350"/>
    </location>
</feature>
<feature type="mutagenesis site" description="No effect on membrane localization." evidence="5">
    <original>E</original>
    <variation>A</variation>
    <location>
        <position position="359"/>
    </location>
</feature>
<feature type="mutagenesis site" description="Predominantly localized to the apical membrane." evidence="5">
    <original>Y</original>
    <variation>A</variation>
    <location>
        <position position="368"/>
    </location>
</feature>
<feature type="mutagenesis site" description="Predominantly localized to the apical membrane." evidence="5">
    <original>Y</original>
    <variation>A</variation>
    <location>
        <position position="380"/>
    </location>
</feature>
<feature type="mutagenesis site" description="Predominantly localized to the apical membrane." evidence="5">
    <original>LI</original>
    <variation>HV</variation>
    <location>
        <begin position="396"/>
        <end position="397"/>
    </location>
</feature>
<feature type="mutagenesis site" description="Predominantly localized to the apical membrane." evidence="5">
    <original>L</original>
    <variation>A</variation>
    <location>
        <position position="396"/>
    </location>
</feature>
<protein>
    <recommendedName>
        <fullName>Adherens junction-associated protein 1</fullName>
    </recommendedName>
    <alternativeName>
        <fullName>Membrane protein shrew-1</fullName>
    </alternativeName>
</protein>
<sequence length="411" mass="44536">MWIQQLLGLSSMSIRWPGRPLGSHAWILIAMFQLAVDLPACEALGPGPEFWLLPRSPPRPPRLWSFRSGQPARVPAPVWSPRPPRVERIHGQMQMPRARRAHRPRDQAAALVPKAGLAKPPAAAKSSPSLASSSSSSSSAVAGGAPEQQALLRRGKRHLQGDGLSSFDSRGSRPTTETEFIAWGPTGDEEALESNTFPGVYGPTTVSILQTRKTTVAATTTTTTTATPMTLQTKGFTESLDPRRRIPGGVSTTEPSTSPSNNGEVTQPPRILGEASGLAVHQIITITVSLIMVIAALITTLVLKNCCAQSGNTRRNSHQRKTNQQEESCQNLTDFPSARVPSSLDIFTAYNETLQCSHECVRASVPVYTDETLHSTTGEYKSTFNGNRPSSSDRHLIPVAFVSEKWFEISC</sequence>
<gene>
    <name type="primary">AJAP1</name>
    <name type="synonym">MOT8</name>
    <name type="synonym">SHREW1</name>
</gene>
<reference key="1">
    <citation type="journal article" date="2004" name="Mol. Biol. Cell">
        <title>Novel membrane protein shrew-1 targets to cadherin-mediated junctions in polarized epithelial cells.</title>
        <authorList>
            <person name="Bharti S."/>
            <person name="Handrow-Metzmacher H."/>
            <person name="Zickenheiner S."/>
            <person name="Zeitvogel A."/>
            <person name="Baumann R."/>
            <person name="Starzinski-Powitz A."/>
        </authorList>
    </citation>
    <scope>NUCLEOTIDE SEQUENCE [MRNA]</scope>
    <scope>TISSUE SPECIFICITY</scope>
    <scope>SUBCELLULAR LOCATION</scope>
    <scope>TOPOLOGY</scope>
    <scope>INTERACTION WITH CDH1 AND CTNNB1</scope>
    <source>
        <tissue>Brain</tissue>
    </source>
</reference>
<reference key="2">
    <citation type="submission" date="1999-08" db="EMBL/GenBank/DDBJ databases">
        <title>Identification of genes differentially expressed in HT1080 human fibrosarcoma cells selected for invasive capacity in vitro.</title>
        <authorList>
            <person name="Kudoh S."/>
            <person name="Chung I.M."/>
            <person name="Tsuiji M."/>
            <person name="Tsuji T."/>
            <person name="Irimura T."/>
        </authorList>
    </citation>
    <scope>NUCLEOTIDE SEQUENCE [MRNA]</scope>
    <source>
        <tissue>Fibrosarcoma</tissue>
    </source>
</reference>
<reference key="3">
    <citation type="journal article" date="2006" name="Nature">
        <title>The DNA sequence and biological annotation of human chromosome 1.</title>
        <authorList>
            <person name="Gregory S.G."/>
            <person name="Barlow K.F."/>
            <person name="McLay K.E."/>
            <person name="Kaul R."/>
            <person name="Swarbreck D."/>
            <person name="Dunham A."/>
            <person name="Scott C.E."/>
            <person name="Howe K.L."/>
            <person name="Woodfine K."/>
            <person name="Spencer C.C.A."/>
            <person name="Jones M.C."/>
            <person name="Gillson C."/>
            <person name="Searle S."/>
            <person name="Zhou Y."/>
            <person name="Kokocinski F."/>
            <person name="McDonald L."/>
            <person name="Evans R."/>
            <person name="Phillips K."/>
            <person name="Atkinson A."/>
            <person name="Cooper R."/>
            <person name="Jones C."/>
            <person name="Hall R.E."/>
            <person name="Andrews T.D."/>
            <person name="Lloyd C."/>
            <person name="Ainscough R."/>
            <person name="Almeida J.P."/>
            <person name="Ambrose K.D."/>
            <person name="Anderson F."/>
            <person name="Andrew R.W."/>
            <person name="Ashwell R.I.S."/>
            <person name="Aubin K."/>
            <person name="Babbage A.K."/>
            <person name="Bagguley C.L."/>
            <person name="Bailey J."/>
            <person name="Beasley H."/>
            <person name="Bethel G."/>
            <person name="Bird C.P."/>
            <person name="Bray-Allen S."/>
            <person name="Brown J.Y."/>
            <person name="Brown A.J."/>
            <person name="Buckley D."/>
            <person name="Burton J."/>
            <person name="Bye J."/>
            <person name="Carder C."/>
            <person name="Chapman J.C."/>
            <person name="Clark S.Y."/>
            <person name="Clarke G."/>
            <person name="Clee C."/>
            <person name="Cobley V."/>
            <person name="Collier R.E."/>
            <person name="Corby N."/>
            <person name="Coville G.J."/>
            <person name="Davies J."/>
            <person name="Deadman R."/>
            <person name="Dunn M."/>
            <person name="Earthrowl M."/>
            <person name="Ellington A.G."/>
            <person name="Errington H."/>
            <person name="Frankish A."/>
            <person name="Frankland J."/>
            <person name="French L."/>
            <person name="Garner P."/>
            <person name="Garnett J."/>
            <person name="Gay L."/>
            <person name="Ghori M.R.J."/>
            <person name="Gibson R."/>
            <person name="Gilby L.M."/>
            <person name="Gillett W."/>
            <person name="Glithero R.J."/>
            <person name="Grafham D.V."/>
            <person name="Griffiths C."/>
            <person name="Griffiths-Jones S."/>
            <person name="Grocock R."/>
            <person name="Hammond S."/>
            <person name="Harrison E.S.I."/>
            <person name="Hart E."/>
            <person name="Haugen E."/>
            <person name="Heath P.D."/>
            <person name="Holmes S."/>
            <person name="Holt K."/>
            <person name="Howden P.J."/>
            <person name="Hunt A.R."/>
            <person name="Hunt S.E."/>
            <person name="Hunter G."/>
            <person name="Isherwood J."/>
            <person name="James R."/>
            <person name="Johnson C."/>
            <person name="Johnson D."/>
            <person name="Joy A."/>
            <person name="Kay M."/>
            <person name="Kershaw J.K."/>
            <person name="Kibukawa M."/>
            <person name="Kimberley A.M."/>
            <person name="King A."/>
            <person name="Knights A.J."/>
            <person name="Lad H."/>
            <person name="Laird G."/>
            <person name="Lawlor S."/>
            <person name="Leongamornlert D.A."/>
            <person name="Lloyd D.M."/>
            <person name="Loveland J."/>
            <person name="Lovell J."/>
            <person name="Lush M.J."/>
            <person name="Lyne R."/>
            <person name="Martin S."/>
            <person name="Mashreghi-Mohammadi M."/>
            <person name="Matthews L."/>
            <person name="Matthews N.S.W."/>
            <person name="McLaren S."/>
            <person name="Milne S."/>
            <person name="Mistry S."/>
            <person name="Moore M.J.F."/>
            <person name="Nickerson T."/>
            <person name="O'Dell C.N."/>
            <person name="Oliver K."/>
            <person name="Palmeiri A."/>
            <person name="Palmer S.A."/>
            <person name="Parker A."/>
            <person name="Patel D."/>
            <person name="Pearce A.V."/>
            <person name="Peck A.I."/>
            <person name="Pelan S."/>
            <person name="Phelps K."/>
            <person name="Phillimore B.J."/>
            <person name="Plumb R."/>
            <person name="Rajan J."/>
            <person name="Raymond C."/>
            <person name="Rouse G."/>
            <person name="Saenphimmachak C."/>
            <person name="Sehra H.K."/>
            <person name="Sheridan E."/>
            <person name="Shownkeen R."/>
            <person name="Sims S."/>
            <person name="Skuce C.D."/>
            <person name="Smith M."/>
            <person name="Steward C."/>
            <person name="Subramanian S."/>
            <person name="Sycamore N."/>
            <person name="Tracey A."/>
            <person name="Tromans A."/>
            <person name="Van Helmond Z."/>
            <person name="Wall M."/>
            <person name="Wallis J.M."/>
            <person name="White S."/>
            <person name="Whitehead S.L."/>
            <person name="Wilkinson J.E."/>
            <person name="Willey D.L."/>
            <person name="Williams H."/>
            <person name="Wilming L."/>
            <person name="Wray P.W."/>
            <person name="Wu Z."/>
            <person name="Coulson A."/>
            <person name="Vaudin M."/>
            <person name="Sulston J.E."/>
            <person name="Durbin R.M."/>
            <person name="Hubbard T."/>
            <person name="Wooster R."/>
            <person name="Dunham I."/>
            <person name="Carter N.P."/>
            <person name="McVean G."/>
            <person name="Ross M.T."/>
            <person name="Harrow J."/>
            <person name="Olson M.V."/>
            <person name="Beck S."/>
            <person name="Rogers J."/>
            <person name="Bentley D.R."/>
        </authorList>
    </citation>
    <scope>NUCLEOTIDE SEQUENCE [LARGE SCALE GENOMIC DNA]</scope>
</reference>
<reference key="4">
    <citation type="submission" date="1999-04" db="EMBL/GenBank/DDBJ databases">
        <authorList>
            <person name="Rhodes S."/>
        </authorList>
    </citation>
    <scope>NUCLEOTIDE SEQUENCE [MRNA] OF 179-411</scope>
</reference>
<reference key="5">
    <citation type="journal article" date="2006" name="Cancer Biol. Ther.">
        <title>The SHREW1 gene, frequently deleted in oligodendrogliomas, functions to inhibit cell adhesion and migration.</title>
        <authorList>
            <person name="McDonald J.M."/>
            <person name="Dunlap S."/>
            <person name="Cogdell D."/>
            <person name="Dunmire V."/>
            <person name="Wei Q."/>
            <person name="Starzinski-Powitz A."/>
            <person name="Sawaya R."/>
            <person name="Bruner J."/>
            <person name="Fuller G.N."/>
            <person name="Aldape K."/>
            <person name="Zhang W."/>
        </authorList>
    </citation>
    <scope>FUNCTION</scope>
    <scope>VARIANT ARG-263</scope>
</reference>
<reference key="6">
    <citation type="journal article" date="2006" name="Mol. Biol. Cell">
        <title>Targeting of transmembrane protein shrew-1 to adherens junctions is controlled by cytoplasmic sorting motifs.</title>
        <authorList>
            <person name="Jakob V."/>
            <person name="Schreiner A."/>
            <person name="Tikkanen R."/>
            <person name="Starzinski-Powitz A."/>
        </authorList>
    </citation>
    <scope>SUBCELLULAR LOCATION</scope>
    <scope>MUTAGENESIS OF LEU-303; LYS-304; TYR-350; GLU-359; TYR-368; TYR-380; 396-LEU--ILE-397 AND LEU-396</scope>
    <scope>INTERACTION WITH AP1M2</scope>
</reference>
<reference key="7">
    <citation type="journal article" date="2007" name="Mol. Biol. Cell">
        <title>junction protein shrew-1 influences cell invasion and interacts with invasion-promoting protein CD147.</title>
        <authorList>
            <person name="Schreiner A."/>
            <person name="Ruonala M."/>
            <person name="Jakob V."/>
            <person name="Suthaus J."/>
            <person name="Boles E."/>
            <person name="Wouters F."/>
            <person name="Starzinski-Powitz A."/>
        </authorList>
    </citation>
    <scope>FUNCTION</scope>
    <scope>INTERACTION WITH BSG</scope>
</reference>
<reference key="8">
    <citation type="journal article" date="2008" name="PLoS ONE">
        <title>Domain organization of long signal peptides of single-pass integral membrane proteins reveals multiple functional capacity.</title>
        <authorList>
            <person name="Hiss J.A."/>
            <person name="Resch E."/>
            <person name="Schreiner A."/>
            <person name="Meissner M."/>
            <person name="Starzinski-Powitz A."/>
            <person name="Schneider G."/>
        </authorList>
    </citation>
    <scope>SIGNAL PEPTIDE</scope>
</reference>
<reference key="9">
    <citation type="journal article" date="2008" name="Traffic">
        <title>Synergism of shrew-1's signal peptide and transmembrane segment required for plasma membrane localization.</title>
        <authorList>
            <person name="Resch E."/>
            <person name="Quaiser S."/>
            <person name="Quaiser T."/>
            <person name="Schneider G."/>
            <person name="Starzinski-Powitz A."/>
            <person name="Schreiner A."/>
        </authorList>
    </citation>
    <scope>SIGNAL PEPTIDE</scope>
</reference>
<comment type="function">
    <text evidence="4 6">Plays a role in cell adhesion and cell migration.</text>
</comment>
<comment type="subunit">
    <text evidence="3 5 6">Forms a complex with CDH1 and CTNNB1; interacts directly with CTNNB1. Interacts with AP1M2. Interacts with isoform 2 of BSG/CD147.</text>
</comment>
<comment type="subcellular location">
    <subcellularLocation>
        <location evidence="5">Basolateral cell membrane</location>
        <topology evidence="1">Single-pass type I membrane protein</topology>
    </subcellularLocation>
    <subcellularLocation>
        <location evidence="5">Apical cell membrane</location>
        <topology evidence="1">Single-pass type I membrane protein</topology>
    </subcellularLocation>
    <subcellularLocation>
        <location evidence="3">Cell junction</location>
        <location evidence="3">Adherens junction</location>
    </subcellularLocation>
    <text evidence="5">Mainly basolateral (PubMed:16707570). Localization is mediated by AP1M2 (PubMed:16707570).</text>
</comment>
<comment type="tissue specificity">
    <text evidence="3">Expressed in uterus and pancreas (at protein level).</text>
</comment>
<comment type="PTM">
    <text>Thr-237 and Ser-239 may be phosphorylated; however as this position is probably extracellular, the in vivo relevance is not proven.</text>
</comment>
<comment type="sequence caution" evidence="7">
    <conflict type="erroneous initiation">
        <sequence resource="EMBL-CDS" id="CAB41245"/>
    </conflict>
</comment>
<comment type="sequence caution" evidence="7">
    <conflict type="erroneous initiation">
        <sequence resource="EMBL-CDS" id="CAB41246"/>
    </conflict>
</comment>
<name>AJAP1_HUMAN</name>
<proteinExistence type="evidence at protein level"/>
<evidence type="ECO:0000255" key="1"/>
<evidence type="ECO:0000256" key="2">
    <source>
        <dbReference type="SAM" id="MobiDB-lite"/>
    </source>
</evidence>
<evidence type="ECO:0000269" key="3">
    <source>
    </source>
</evidence>
<evidence type="ECO:0000269" key="4">
    <source>
    </source>
</evidence>
<evidence type="ECO:0000269" key="5">
    <source>
    </source>
</evidence>
<evidence type="ECO:0000269" key="6">
    <source>
    </source>
</evidence>
<evidence type="ECO:0000305" key="7"/>
<organism>
    <name type="scientific">Homo sapiens</name>
    <name type="common">Human</name>
    <dbReference type="NCBI Taxonomy" id="9606"/>
    <lineage>
        <taxon>Eukaryota</taxon>
        <taxon>Metazoa</taxon>
        <taxon>Chordata</taxon>
        <taxon>Craniata</taxon>
        <taxon>Vertebrata</taxon>
        <taxon>Euteleostomi</taxon>
        <taxon>Mammalia</taxon>
        <taxon>Eutheria</taxon>
        <taxon>Euarchontoglires</taxon>
        <taxon>Primates</taxon>
        <taxon>Haplorrhini</taxon>
        <taxon>Catarrhini</taxon>
        <taxon>Hominidae</taxon>
        <taxon>Homo</taxon>
    </lineage>
</organism>
<keyword id="KW-0130">Cell adhesion</keyword>
<keyword id="KW-0965">Cell junction</keyword>
<keyword id="KW-1003">Cell membrane</keyword>
<keyword id="KW-0472">Membrane</keyword>
<keyword id="KW-0597">Phosphoprotein</keyword>
<keyword id="KW-1267">Proteomics identification</keyword>
<keyword id="KW-1185">Reference proteome</keyword>
<keyword id="KW-0732">Signal</keyword>
<keyword id="KW-0812">Transmembrane</keyword>
<keyword id="KW-1133">Transmembrane helix</keyword>
<dbReference type="EMBL" id="AY282806">
    <property type="protein sequence ID" value="AAP35025.1"/>
    <property type="molecule type" value="mRNA"/>
</dbReference>
<dbReference type="EMBL" id="AF175409">
    <property type="protein sequence ID" value="AAD53278.1"/>
    <property type="molecule type" value="mRNA"/>
</dbReference>
<dbReference type="EMBL" id="AL391808">
    <property type="status" value="NOT_ANNOTATED_CDS"/>
    <property type="molecule type" value="Genomic_DNA"/>
</dbReference>
<dbReference type="EMBL" id="AL023586">
    <property type="status" value="NOT_ANNOTATED_CDS"/>
    <property type="molecule type" value="Genomic_DNA"/>
</dbReference>
<dbReference type="EMBL" id="Z98886">
    <property type="status" value="NOT_ANNOTATED_CDS"/>
    <property type="molecule type" value="Genomic_DNA"/>
</dbReference>
<dbReference type="EMBL" id="AL049672">
    <property type="protein sequence ID" value="CAB41245.1"/>
    <property type="status" value="ALT_INIT"/>
    <property type="molecule type" value="mRNA"/>
</dbReference>
<dbReference type="EMBL" id="AL049673">
    <property type="protein sequence ID" value="CAB41246.1"/>
    <property type="status" value="ALT_INIT"/>
    <property type="molecule type" value="mRNA"/>
</dbReference>
<dbReference type="CCDS" id="CCDS54.1"/>
<dbReference type="RefSeq" id="NP_001035943.1">
    <property type="nucleotide sequence ID" value="NM_001042478.2"/>
</dbReference>
<dbReference type="RefSeq" id="NP_061324.1">
    <property type="nucleotide sequence ID" value="NM_018836.4"/>
</dbReference>
<dbReference type="RefSeq" id="XP_011540088.1">
    <property type="nucleotide sequence ID" value="XM_011541786.3"/>
</dbReference>
<dbReference type="BioGRID" id="121012">
    <property type="interactions" value="3"/>
</dbReference>
<dbReference type="FunCoup" id="Q9UKB5">
    <property type="interactions" value="210"/>
</dbReference>
<dbReference type="IntAct" id="Q9UKB5">
    <property type="interactions" value="2"/>
</dbReference>
<dbReference type="MINT" id="Q9UKB5"/>
<dbReference type="STRING" id="9606.ENSP00000367433"/>
<dbReference type="GlyGen" id="Q9UKB5">
    <property type="glycosylation" value="1 site"/>
</dbReference>
<dbReference type="iPTMnet" id="Q9UKB5"/>
<dbReference type="PhosphoSitePlus" id="Q9UKB5"/>
<dbReference type="BioMuta" id="AJAP1"/>
<dbReference type="DMDM" id="74761984"/>
<dbReference type="jPOST" id="Q9UKB5"/>
<dbReference type="MassIVE" id="Q9UKB5"/>
<dbReference type="PaxDb" id="9606-ENSP00000367433"/>
<dbReference type="PeptideAtlas" id="Q9UKB5"/>
<dbReference type="ProteomicsDB" id="84765"/>
<dbReference type="Antibodypedia" id="2726">
    <property type="antibodies" value="51 antibodies from 19 providers"/>
</dbReference>
<dbReference type="DNASU" id="55966"/>
<dbReference type="Ensembl" id="ENST00000378190.7">
    <property type="protein sequence ID" value="ENSP00000367432.3"/>
    <property type="gene ID" value="ENSG00000196581.11"/>
</dbReference>
<dbReference type="Ensembl" id="ENST00000378191.5">
    <property type="protein sequence ID" value="ENSP00000367433.3"/>
    <property type="gene ID" value="ENSG00000196581.11"/>
</dbReference>
<dbReference type="GeneID" id="55966"/>
<dbReference type="KEGG" id="hsa:55966"/>
<dbReference type="MANE-Select" id="ENST00000378191.5">
    <property type="protein sequence ID" value="ENSP00000367433.3"/>
    <property type="RefSeq nucleotide sequence ID" value="NM_018836.4"/>
    <property type="RefSeq protein sequence ID" value="NP_061324.1"/>
</dbReference>
<dbReference type="UCSC" id="uc001alm.2">
    <property type="organism name" value="human"/>
</dbReference>
<dbReference type="AGR" id="HGNC:30801"/>
<dbReference type="CTD" id="55966"/>
<dbReference type="DisGeNET" id="55966"/>
<dbReference type="GeneCards" id="AJAP1"/>
<dbReference type="HGNC" id="HGNC:30801">
    <property type="gene designation" value="AJAP1"/>
</dbReference>
<dbReference type="HPA" id="ENSG00000196581">
    <property type="expression patterns" value="Tissue enhanced (brain)"/>
</dbReference>
<dbReference type="MIM" id="610972">
    <property type="type" value="gene"/>
</dbReference>
<dbReference type="neXtProt" id="NX_Q9UKB5"/>
<dbReference type="OpenTargets" id="ENSG00000196581"/>
<dbReference type="PharmGKB" id="PA142672629"/>
<dbReference type="VEuPathDB" id="HostDB:ENSG00000196581"/>
<dbReference type="eggNOG" id="ENOG502QVMU">
    <property type="taxonomic scope" value="Eukaryota"/>
</dbReference>
<dbReference type="GeneTree" id="ENSGT00510000048586"/>
<dbReference type="HOGENOM" id="CLU_055642_1_0_1"/>
<dbReference type="InParanoid" id="Q9UKB5"/>
<dbReference type="OMA" id="PEANTFP"/>
<dbReference type="OrthoDB" id="9949932at2759"/>
<dbReference type="PAN-GO" id="Q9UKB5">
    <property type="GO annotations" value="5 GO annotations based on evolutionary models"/>
</dbReference>
<dbReference type="PhylomeDB" id="Q9UKB5"/>
<dbReference type="TreeFam" id="TF336539"/>
<dbReference type="PathwayCommons" id="Q9UKB5"/>
<dbReference type="SignaLink" id="Q9UKB5"/>
<dbReference type="BioGRID-ORCS" id="55966">
    <property type="hits" value="8 hits in 1144 CRISPR screens"/>
</dbReference>
<dbReference type="ChiTaRS" id="AJAP1">
    <property type="organism name" value="human"/>
</dbReference>
<dbReference type="GenomeRNAi" id="55966"/>
<dbReference type="Pharos" id="Q9UKB5">
    <property type="development level" value="Tbio"/>
</dbReference>
<dbReference type="PRO" id="PR:Q9UKB5"/>
<dbReference type="Proteomes" id="UP000005640">
    <property type="component" value="Chromosome 1"/>
</dbReference>
<dbReference type="RNAct" id="Q9UKB5">
    <property type="molecule type" value="protein"/>
</dbReference>
<dbReference type="Bgee" id="ENSG00000196581">
    <property type="expression patterns" value="Expressed in orbitofrontal cortex and 116 other cell types or tissues"/>
</dbReference>
<dbReference type="GO" id="GO:0005912">
    <property type="term" value="C:adherens junction"/>
    <property type="evidence" value="ECO:0000314"/>
    <property type="project" value="UniProtKB"/>
</dbReference>
<dbReference type="GO" id="GO:0016324">
    <property type="term" value="C:apical plasma membrane"/>
    <property type="evidence" value="ECO:0007669"/>
    <property type="project" value="UniProtKB-SubCell"/>
</dbReference>
<dbReference type="GO" id="GO:0016323">
    <property type="term" value="C:basolateral plasma membrane"/>
    <property type="evidence" value="ECO:0000314"/>
    <property type="project" value="UniProtKB"/>
</dbReference>
<dbReference type="GO" id="GO:0009986">
    <property type="term" value="C:cell surface"/>
    <property type="evidence" value="ECO:0000314"/>
    <property type="project" value="UniProtKB"/>
</dbReference>
<dbReference type="GO" id="GO:0044291">
    <property type="term" value="C:cell-cell contact zone"/>
    <property type="evidence" value="ECO:0000314"/>
    <property type="project" value="UniProtKB"/>
</dbReference>
<dbReference type="GO" id="GO:0009898">
    <property type="term" value="C:cytoplasmic side of plasma membrane"/>
    <property type="evidence" value="ECO:0000314"/>
    <property type="project" value="UniProtKB"/>
</dbReference>
<dbReference type="GO" id="GO:0005886">
    <property type="term" value="C:plasma membrane"/>
    <property type="evidence" value="ECO:0000314"/>
    <property type="project" value="UniProtKB"/>
</dbReference>
<dbReference type="GO" id="GO:0008013">
    <property type="term" value="F:beta-catenin binding"/>
    <property type="evidence" value="ECO:0000353"/>
    <property type="project" value="UniProtKB"/>
</dbReference>
<dbReference type="GO" id="GO:0019904">
    <property type="term" value="F:protein domain specific binding"/>
    <property type="evidence" value="ECO:0007669"/>
    <property type="project" value="Ensembl"/>
</dbReference>
<dbReference type="GO" id="GO:0044877">
    <property type="term" value="F:protein-containing complex binding"/>
    <property type="evidence" value="ECO:0000314"/>
    <property type="project" value="UniProtKB"/>
</dbReference>
<dbReference type="GO" id="GO:0007155">
    <property type="term" value="P:cell adhesion"/>
    <property type="evidence" value="ECO:0007669"/>
    <property type="project" value="UniProtKB-KW"/>
</dbReference>
<dbReference type="GO" id="GO:0001953">
    <property type="term" value="P:negative regulation of cell-matrix adhesion"/>
    <property type="evidence" value="ECO:0000314"/>
    <property type="project" value="UniProtKB"/>
</dbReference>
<dbReference type="GO" id="GO:0061045">
    <property type="term" value="P:negative regulation of wound healing"/>
    <property type="evidence" value="ECO:0000314"/>
    <property type="project" value="UniProtKB"/>
</dbReference>
<dbReference type="GO" id="GO:0030860">
    <property type="term" value="P:regulation of polarized epithelial cell differentiation"/>
    <property type="evidence" value="ECO:0000314"/>
    <property type="project" value="UniProtKB"/>
</dbReference>
<dbReference type="InterPro" id="IPR039239">
    <property type="entry name" value="AJAP1"/>
</dbReference>
<dbReference type="InterPro" id="IPR029198">
    <property type="entry name" value="AJAP1_PANP_C"/>
</dbReference>
<dbReference type="PANTHER" id="PTHR32422">
    <property type="entry name" value="ADHERENS JUNCTION-ASSOCIATED PROTEIN 1"/>
    <property type="match status" value="1"/>
</dbReference>
<dbReference type="PANTHER" id="PTHR32422:SF0">
    <property type="entry name" value="ADHERENS JUNCTION-ASSOCIATED PROTEIN 1"/>
    <property type="match status" value="1"/>
</dbReference>
<dbReference type="Pfam" id="PF15298">
    <property type="entry name" value="AJAP1_PANP_C"/>
    <property type="match status" value="1"/>
</dbReference>
<accession>Q9UKB5</accession>
<accession>Q9Y229</accession>